<comment type="function">
    <text evidence="1">Required for the activity of the bacterial periplasmic transport system of putrescine and spermidine.</text>
</comment>
<comment type="subcellular location">
    <subcellularLocation>
        <location evidence="1">Cell inner membrane</location>
        <topology evidence="3">Multi-pass membrane protein</topology>
    </subcellularLocation>
</comment>
<comment type="similarity">
    <text evidence="4">Belongs to the binding-protein-dependent transport system permease family. CysTW subfamily.</text>
</comment>
<comment type="sequence caution" evidence="4">
    <conflict type="frameshift">
        <sequence resource="EMBL-CDS" id="AAC22989"/>
    </conflict>
</comment>
<gene>
    <name type="primary">potC</name>
    <name type="ordered locus">HI_1345</name>
</gene>
<feature type="chain" id="PRO_0000060184" description="Spermidine/putrescine transport system permease protein PotC">
    <location>
        <begin position="1"/>
        <end position="257"/>
    </location>
</feature>
<feature type="topological domain" description="Cytoplasmic" evidence="2">
    <location>
        <begin position="1"/>
        <end position="7"/>
    </location>
</feature>
<feature type="transmembrane region" description="Helical" evidence="3">
    <location>
        <begin position="8"/>
        <end position="27"/>
    </location>
</feature>
<feature type="topological domain" description="Periplasmic" evidence="2">
    <location>
        <begin position="28"/>
        <end position="65"/>
    </location>
</feature>
<feature type="transmembrane region" description="Helical" evidence="3">
    <location>
        <begin position="66"/>
        <end position="85"/>
    </location>
</feature>
<feature type="topological domain" description="Cytoplasmic" evidence="2">
    <location>
        <begin position="86"/>
        <end position="100"/>
    </location>
</feature>
<feature type="transmembrane region" description="Helical" evidence="3">
    <location>
        <begin position="101"/>
        <end position="120"/>
    </location>
</feature>
<feature type="topological domain" description="Periplasmic" evidence="2">
    <location>
        <begin position="121"/>
        <end position="128"/>
    </location>
</feature>
<feature type="transmembrane region" description="Helical" evidence="3">
    <location>
        <begin position="129"/>
        <end position="148"/>
    </location>
</feature>
<feature type="topological domain" description="Cytoplasmic" evidence="2">
    <location>
        <begin position="149"/>
        <end position="176"/>
    </location>
</feature>
<feature type="transmembrane region" description="Helical" evidence="3">
    <location>
        <begin position="177"/>
        <end position="196"/>
    </location>
</feature>
<feature type="topological domain" description="Periplasmic" evidence="2">
    <location>
        <begin position="197"/>
        <end position="231"/>
    </location>
</feature>
<feature type="transmembrane region" description="Helical" evidence="3">
    <location>
        <begin position="232"/>
        <end position="251"/>
    </location>
</feature>
<feature type="topological domain" description="Cytoplasmic" evidence="2">
    <location>
        <begin position="252"/>
        <end position="257"/>
    </location>
</feature>
<feature type="domain" description="ABC transmembrane type-1" evidence="3">
    <location>
        <begin position="60"/>
        <end position="248"/>
    </location>
</feature>
<sequence length="257" mass="28614">MSRFFLRNAFMFVVYAYLYIPIIILVTNSFNKDRYGLSWKGFSWNWYERLFNNDTLIQAAIHSVTIAFFAATLATIVGGLTAIALYRYRFRGKQAVSGMLFIVMMSPDIVMAVSLLALFMVVGISLGFWSLLLAHVTFCLPYVTVTIFSRLNGFDSRMLEAAKDLGASEVTILRKIILPLALPAVVSGWLLSFTISLDDVVVSSFVSGVSYEILPLRIFSLVKTGVTPEVNALATIMIVLSLALVVLSQLITRKNNH</sequence>
<organism>
    <name type="scientific">Haemophilus influenzae (strain ATCC 51907 / DSM 11121 / KW20 / Rd)</name>
    <dbReference type="NCBI Taxonomy" id="71421"/>
    <lineage>
        <taxon>Bacteria</taxon>
        <taxon>Pseudomonadati</taxon>
        <taxon>Pseudomonadota</taxon>
        <taxon>Gammaproteobacteria</taxon>
        <taxon>Pasteurellales</taxon>
        <taxon>Pasteurellaceae</taxon>
        <taxon>Haemophilus</taxon>
    </lineage>
</organism>
<keyword id="KW-0997">Cell inner membrane</keyword>
<keyword id="KW-1003">Cell membrane</keyword>
<keyword id="KW-0472">Membrane</keyword>
<keyword id="KW-1185">Reference proteome</keyword>
<keyword id="KW-0812">Transmembrane</keyword>
<keyword id="KW-1133">Transmembrane helix</keyword>
<keyword id="KW-0813">Transport</keyword>
<protein>
    <recommendedName>
        <fullName>Spermidine/putrescine transport system permease protein PotC</fullName>
    </recommendedName>
</protein>
<dbReference type="EMBL" id="L42023">
    <property type="protein sequence ID" value="AAC22989.1"/>
    <property type="status" value="ALT_FRAME"/>
    <property type="molecule type" value="Genomic_DNA"/>
</dbReference>
<dbReference type="PIR" id="I64117">
    <property type="entry name" value="I64117"/>
</dbReference>
<dbReference type="RefSeq" id="NP_439496.1">
    <property type="nucleotide sequence ID" value="NC_000907.1"/>
</dbReference>
<dbReference type="SMR" id="P45169"/>
<dbReference type="STRING" id="71421.HI_1345"/>
<dbReference type="EnsemblBacteria" id="AAC22989">
    <property type="protein sequence ID" value="AAC22989"/>
    <property type="gene ID" value="HI_1345"/>
</dbReference>
<dbReference type="KEGG" id="hin:HI_1345"/>
<dbReference type="PATRIC" id="fig|71421.8.peg.1397"/>
<dbReference type="eggNOG" id="COG1177">
    <property type="taxonomic scope" value="Bacteria"/>
</dbReference>
<dbReference type="HOGENOM" id="CLU_016047_3_0_6"/>
<dbReference type="OrthoDB" id="9782004at2"/>
<dbReference type="PhylomeDB" id="P45169"/>
<dbReference type="Proteomes" id="UP000000579">
    <property type="component" value="Chromosome"/>
</dbReference>
<dbReference type="GO" id="GO:0005886">
    <property type="term" value="C:plasma membrane"/>
    <property type="evidence" value="ECO:0007669"/>
    <property type="project" value="UniProtKB-SubCell"/>
</dbReference>
<dbReference type="GO" id="GO:0055085">
    <property type="term" value="P:transmembrane transport"/>
    <property type="evidence" value="ECO:0007669"/>
    <property type="project" value="InterPro"/>
</dbReference>
<dbReference type="CDD" id="cd06261">
    <property type="entry name" value="TM_PBP2"/>
    <property type="match status" value="1"/>
</dbReference>
<dbReference type="Gene3D" id="1.10.3720.10">
    <property type="entry name" value="MetI-like"/>
    <property type="match status" value="1"/>
</dbReference>
<dbReference type="InterPro" id="IPR051789">
    <property type="entry name" value="Bact_Polyamine_Transport"/>
</dbReference>
<dbReference type="InterPro" id="IPR000515">
    <property type="entry name" value="MetI-like"/>
</dbReference>
<dbReference type="InterPro" id="IPR035906">
    <property type="entry name" value="MetI-like_sf"/>
</dbReference>
<dbReference type="NCBIfam" id="NF007047">
    <property type="entry name" value="PRK09500.1"/>
    <property type="match status" value="1"/>
</dbReference>
<dbReference type="PANTHER" id="PTHR43848">
    <property type="entry name" value="PUTRESCINE TRANSPORT SYSTEM PERMEASE PROTEIN POTI"/>
    <property type="match status" value="1"/>
</dbReference>
<dbReference type="PANTHER" id="PTHR43848:SF5">
    <property type="entry name" value="SPERMIDINE_PUTRESCINE TRANSPORT SYSTEM PERMEASE PROTEIN POTC"/>
    <property type="match status" value="1"/>
</dbReference>
<dbReference type="Pfam" id="PF00528">
    <property type="entry name" value="BPD_transp_1"/>
    <property type="match status" value="1"/>
</dbReference>
<dbReference type="SUPFAM" id="SSF161098">
    <property type="entry name" value="MetI-like"/>
    <property type="match status" value="1"/>
</dbReference>
<dbReference type="PROSITE" id="PS50928">
    <property type="entry name" value="ABC_TM1"/>
    <property type="match status" value="1"/>
</dbReference>
<name>POTC_HAEIN</name>
<accession>P45169</accession>
<reference key="1">
    <citation type="journal article" date="1995" name="Science">
        <title>Whole-genome random sequencing and assembly of Haemophilus influenzae Rd.</title>
        <authorList>
            <person name="Fleischmann R.D."/>
            <person name="Adams M.D."/>
            <person name="White O."/>
            <person name="Clayton R.A."/>
            <person name="Kirkness E.F."/>
            <person name="Kerlavage A.R."/>
            <person name="Bult C.J."/>
            <person name="Tomb J.-F."/>
            <person name="Dougherty B.A."/>
            <person name="Merrick J.M."/>
            <person name="McKenney K."/>
            <person name="Sutton G.G."/>
            <person name="FitzHugh W."/>
            <person name="Fields C.A."/>
            <person name="Gocayne J.D."/>
            <person name="Scott J.D."/>
            <person name="Shirley R."/>
            <person name="Liu L.-I."/>
            <person name="Glodek A."/>
            <person name="Kelley J.M."/>
            <person name="Weidman J.F."/>
            <person name="Phillips C.A."/>
            <person name="Spriggs T."/>
            <person name="Hedblom E."/>
            <person name="Cotton M.D."/>
            <person name="Utterback T.R."/>
            <person name="Hanna M.C."/>
            <person name="Nguyen D.T."/>
            <person name="Saudek D.M."/>
            <person name="Brandon R.C."/>
            <person name="Fine L.D."/>
            <person name="Fritchman J.L."/>
            <person name="Fuhrmann J.L."/>
            <person name="Geoghagen N.S.M."/>
            <person name="Gnehm C.L."/>
            <person name="McDonald L.A."/>
            <person name="Small K.V."/>
            <person name="Fraser C.M."/>
            <person name="Smith H.O."/>
            <person name="Venter J.C."/>
        </authorList>
    </citation>
    <scope>NUCLEOTIDE SEQUENCE [LARGE SCALE GENOMIC DNA]</scope>
    <source>
        <strain>ATCC 51907 / DSM 11121 / KW20 / Rd</strain>
    </source>
</reference>
<proteinExistence type="inferred from homology"/>
<evidence type="ECO:0000250" key="1"/>
<evidence type="ECO:0000255" key="2"/>
<evidence type="ECO:0000255" key="3">
    <source>
        <dbReference type="PROSITE-ProRule" id="PRU00441"/>
    </source>
</evidence>
<evidence type="ECO:0000305" key="4"/>